<gene>
    <name evidence="1" type="primary">pdxB</name>
    <name type="ordered locus">Sde_1159</name>
</gene>
<comment type="function">
    <text evidence="1">Catalyzes the oxidation of erythronate-4-phosphate to 3-hydroxy-2-oxo-4-phosphonooxybutanoate.</text>
</comment>
<comment type="catalytic activity">
    <reaction evidence="1">
        <text>4-phospho-D-erythronate + NAD(+) = (R)-3-hydroxy-2-oxo-4-phosphooxybutanoate + NADH + H(+)</text>
        <dbReference type="Rhea" id="RHEA:18829"/>
        <dbReference type="ChEBI" id="CHEBI:15378"/>
        <dbReference type="ChEBI" id="CHEBI:57540"/>
        <dbReference type="ChEBI" id="CHEBI:57945"/>
        <dbReference type="ChEBI" id="CHEBI:58538"/>
        <dbReference type="ChEBI" id="CHEBI:58766"/>
        <dbReference type="EC" id="1.1.1.290"/>
    </reaction>
</comment>
<comment type="pathway">
    <text evidence="1">Cofactor biosynthesis; pyridoxine 5'-phosphate biosynthesis; pyridoxine 5'-phosphate from D-erythrose 4-phosphate: step 2/5.</text>
</comment>
<comment type="subunit">
    <text evidence="1">Homodimer.</text>
</comment>
<comment type="subcellular location">
    <subcellularLocation>
        <location evidence="1">Cytoplasm</location>
    </subcellularLocation>
</comment>
<comment type="similarity">
    <text evidence="1">Belongs to the D-isomer specific 2-hydroxyacid dehydrogenase family. PdxB subfamily.</text>
</comment>
<accession>Q21LK8</accession>
<organism>
    <name type="scientific">Saccharophagus degradans (strain 2-40 / ATCC 43961 / DSM 17024)</name>
    <dbReference type="NCBI Taxonomy" id="203122"/>
    <lineage>
        <taxon>Bacteria</taxon>
        <taxon>Pseudomonadati</taxon>
        <taxon>Pseudomonadota</taxon>
        <taxon>Gammaproteobacteria</taxon>
        <taxon>Cellvibrionales</taxon>
        <taxon>Cellvibrionaceae</taxon>
        <taxon>Saccharophagus</taxon>
    </lineage>
</organism>
<dbReference type="EC" id="1.1.1.290" evidence="1"/>
<dbReference type="EMBL" id="CP000282">
    <property type="protein sequence ID" value="ABD80421.1"/>
    <property type="molecule type" value="Genomic_DNA"/>
</dbReference>
<dbReference type="RefSeq" id="WP_011467641.1">
    <property type="nucleotide sequence ID" value="NC_007912.1"/>
</dbReference>
<dbReference type="SMR" id="Q21LK8"/>
<dbReference type="STRING" id="203122.Sde_1159"/>
<dbReference type="GeneID" id="98612838"/>
<dbReference type="KEGG" id="sde:Sde_1159"/>
<dbReference type="eggNOG" id="COG0111">
    <property type="taxonomic scope" value="Bacteria"/>
</dbReference>
<dbReference type="HOGENOM" id="CLU_019796_4_0_6"/>
<dbReference type="OrthoDB" id="9770208at2"/>
<dbReference type="UniPathway" id="UPA00244">
    <property type="reaction ID" value="UER00310"/>
</dbReference>
<dbReference type="Proteomes" id="UP000001947">
    <property type="component" value="Chromosome"/>
</dbReference>
<dbReference type="GO" id="GO:0005829">
    <property type="term" value="C:cytosol"/>
    <property type="evidence" value="ECO:0007669"/>
    <property type="project" value="TreeGrafter"/>
</dbReference>
<dbReference type="GO" id="GO:0033711">
    <property type="term" value="F:4-phosphoerythronate dehydrogenase activity"/>
    <property type="evidence" value="ECO:0007669"/>
    <property type="project" value="UniProtKB-EC"/>
</dbReference>
<dbReference type="GO" id="GO:0051287">
    <property type="term" value="F:NAD binding"/>
    <property type="evidence" value="ECO:0007669"/>
    <property type="project" value="InterPro"/>
</dbReference>
<dbReference type="GO" id="GO:0046983">
    <property type="term" value="F:protein dimerization activity"/>
    <property type="evidence" value="ECO:0007669"/>
    <property type="project" value="InterPro"/>
</dbReference>
<dbReference type="GO" id="GO:0036001">
    <property type="term" value="P:'de novo' pyridoxal 5'-phosphate biosynthetic process"/>
    <property type="evidence" value="ECO:0007669"/>
    <property type="project" value="TreeGrafter"/>
</dbReference>
<dbReference type="GO" id="GO:0008615">
    <property type="term" value="P:pyridoxine biosynthetic process"/>
    <property type="evidence" value="ECO:0007669"/>
    <property type="project" value="UniProtKB-UniRule"/>
</dbReference>
<dbReference type="CDD" id="cd12158">
    <property type="entry name" value="ErythrP_dh"/>
    <property type="match status" value="1"/>
</dbReference>
<dbReference type="Gene3D" id="3.30.1370.170">
    <property type="match status" value="1"/>
</dbReference>
<dbReference type="Gene3D" id="3.40.50.720">
    <property type="entry name" value="NAD(P)-binding Rossmann-like Domain"/>
    <property type="match status" value="2"/>
</dbReference>
<dbReference type="HAMAP" id="MF_01825">
    <property type="entry name" value="PdxB"/>
    <property type="match status" value="1"/>
</dbReference>
<dbReference type="InterPro" id="IPR006139">
    <property type="entry name" value="D-isomer_2_OHA_DH_cat_dom"/>
</dbReference>
<dbReference type="InterPro" id="IPR006140">
    <property type="entry name" value="D-isomer_DH_NAD-bd"/>
</dbReference>
<dbReference type="InterPro" id="IPR020921">
    <property type="entry name" value="Erythronate-4-P_DHase"/>
</dbReference>
<dbReference type="InterPro" id="IPR024531">
    <property type="entry name" value="Erythronate-4-P_DHase_dimer"/>
</dbReference>
<dbReference type="InterPro" id="IPR036291">
    <property type="entry name" value="NAD(P)-bd_dom_sf"/>
</dbReference>
<dbReference type="InterPro" id="IPR038251">
    <property type="entry name" value="PdxB_dimer_sf"/>
</dbReference>
<dbReference type="PANTHER" id="PTHR42938">
    <property type="entry name" value="FORMATE DEHYDROGENASE 1"/>
    <property type="match status" value="1"/>
</dbReference>
<dbReference type="PANTHER" id="PTHR42938:SF9">
    <property type="entry name" value="FORMATE DEHYDROGENASE 1"/>
    <property type="match status" value="1"/>
</dbReference>
<dbReference type="Pfam" id="PF00389">
    <property type="entry name" value="2-Hacid_dh"/>
    <property type="match status" value="1"/>
</dbReference>
<dbReference type="Pfam" id="PF02826">
    <property type="entry name" value="2-Hacid_dh_C"/>
    <property type="match status" value="1"/>
</dbReference>
<dbReference type="Pfam" id="PF11890">
    <property type="entry name" value="DUF3410"/>
    <property type="match status" value="1"/>
</dbReference>
<dbReference type="SUPFAM" id="SSF52283">
    <property type="entry name" value="Formate/glycerate dehydrogenase catalytic domain-like"/>
    <property type="match status" value="1"/>
</dbReference>
<dbReference type="SUPFAM" id="SSF51735">
    <property type="entry name" value="NAD(P)-binding Rossmann-fold domains"/>
    <property type="match status" value="1"/>
</dbReference>
<protein>
    <recommendedName>
        <fullName evidence="1">Erythronate-4-phosphate dehydrogenase</fullName>
        <ecNumber evidence="1">1.1.1.290</ecNumber>
    </recommendedName>
</protein>
<evidence type="ECO:0000255" key="1">
    <source>
        <dbReference type="HAMAP-Rule" id="MF_01825"/>
    </source>
</evidence>
<reference key="1">
    <citation type="journal article" date="2008" name="PLoS Genet.">
        <title>Complete genome sequence of the complex carbohydrate-degrading marine bacterium, Saccharophagus degradans strain 2-40 T.</title>
        <authorList>
            <person name="Weiner R.M."/>
            <person name="Taylor L.E. II"/>
            <person name="Henrissat B."/>
            <person name="Hauser L."/>
            <person name="Land M."/>
            <person name="Coutinho P.M."/>
            <person name="Rancurel C."/>
            <person name="Saunders E.H."/>
            <person name="Longmire A.G."/>
            <person name="Zhang H."/>
            <person name="Bayer E.A."/>
            <person name="Gilbert H.J."/>
            <person name="Larimer F."/>
            <person name="Zhulin I.B."/>
            <person name="Ekborg N.A."/>
            <person name="Lamed R."/>
            <person name="Richardson P.M."/>
            <person name="Borovok I."/>
            <person name="Hutcheson S."/>
        </authorList>
    </citation>
    <scope>NUCLEOTIDE SEQUENCE [LARGE SCALE GENOMIC DNA]</scope>
    <source>
        <strain>2-40 / ATCC 43961 / DSM 17024</strain>
    </source>
</reference>
<keyword id="KW-0963">Cytoplasm</keyword>
<keyword id="KW-0520">NAD</keyword>
<keyword id="KW-0560">Oxidoreductase</keyword>
<keyword id="KW-0664">Pyridoxine biosynthesis</keyword>
<keyword id="KW-1185">Reference proteome</keyword>
<proteinExistence type="inferred from homology"/>
<feature type="chain" id="PRO_0000297461" description="Erythronate-4-phosphate dehydrogenase">
    <location>
        <begin position="1"/>
        <end position="373"/>
    </location>
</feature>
<feature type="active site" evidence="1">
    <location>
        <position position="206"/>
    </location>
</feature>
<feature type="active site" evidence="1">
    <location>
        <position position="235"/>
    </location>
</feature>
<feature type="active site" description="Proton donor" evidence="1">
    <location>
        <position position="252"/>
    </location>
</feature>
<feature type="binding site" evidence="1">
    <location>
        <position position="45"/>
    </location>
    <ligand>
        <name>substrate</name>
    </ligand>
</feature>
<feature type="binding site" evidence="1">
    <location>
        <position position="66"/>
    </location>
    <ligand>
        <name>substrate</name>
    </ligand>
</feature>
<feature type="binding site" evidence="1">
    <location>
        <position position="146"/>
    </location>
    <ligand>
        <name>NAD(+)</name>
        <dbReference type="ChEBI" id="CHEBI:57540"/>
    </ligand>
</feature>
<feature type="binding site" evidence="1">
    <location>
        <position position="173"/>
    </location>
    <ligand>
        <name>NAD(+)</name>
        <dbReference type="ChEBI" id="CHEBI:57540"/>
    </ligand>
</feature>
<feature type="binding site" evidence="1">
    <location>
        <position position="230"/>
    </location>
    <ligand>
        <name>NAD(+)</name>
        <dbReference type="ChEBI" id="CHEBI:57540"/>
    </ligand>
</feature>
<feature type="binding site" evidence="1">
    <location>
        <position position="255"/>
    </location>
    <ligand>
        <name>NAD(+)</name>
        <dbReference type="ChEBI" id="CHEBI:57540"/>
    </ligand>
</feature>
<feature type="binding site" evidence="1">
    <location>
        <position position="256"/>
    </location>
    <ligand>
        <name>substrate</name>
    </ligand>
</feature>
<sequence length="373" mass="40728">MKIVADENIPFVNELFEPIGEILLRPGREITPADVKNADILLVRSVTPVNAALLEGSKVQFVGTCTIGTDHLDKAYLDERDIAYSSAPGCNAGGVVQYALSAMAVLGLLQDSPSKDFKVAVVGCGNVGSRVYRTLSALGYDCIGVDPFLDTSTIPHLQPFEAIYDCDLICCHTPLTRSGPAPTEHMFNTDVFNHLKSGATLLNAGRGGVIDNRALLQYLNTHNDLTVVLDVWESEPDILVELLDAVALGSTHIAGYSYEGRINGSLMIHRALIDYLLAHGEHPEDTRRAIEAYVAKDKETINVTSFADAVLATYDVRDDDALLRQAVQGLPASFDMLRKQYRKRREFSHYQIEAAPPKLMPLLQSLGYGVVAK</sequence>
<name>PDXB_SACD2</name>